<protein>
    <recommendedName>
        <fullName evidence="2">Protein archease</fullName>
    </recommendedName>
</protein>
<comment type="function">
    <text evidence="1">Activates the tRNA-splicing ligase complex by facilitating the enzymatic turnover of catalytic subunit RtcB. Acts by promoting the guanylylation of RtcB, a key intermediate step in tRNA ligation. Can also alter the NTP specificity of RtcB such that ATP, dGTP or ITP is used efficiently (By similarity).</text>
</comment>
<comment type="similarity">
    <text evidence="2">Belongs to the archease family.</text>
</comment>
<gene>
    <name type="ordered locus">LS215_1545</name>
</gene>
<dbReference type="EMBL" id="CP001399">
    <property type="protein sequence ID" value="ACP35552.1"/>
    <property type="molecule type" value="Genomic_DNA"/>
</dbReference>
<dbReference type="RefSeq" id="WP_012713743.1">
    <property type="nucleotide sequence ID" value="NC_012589.1"/>
</dbReference>
<dbReference type="SMR" id="C3MQ89"/>
<dbReference type="GeneID" id="7799175"/>
<dbReference type="KEGG" id="sis:LS215_1545"/>
<dbReference type="HOGENOM" id="CLU_111362_3_0_2"/>
<dbReference type="OrthoDB" id="8831at2157"/>
<dbReference type="Proteomes" id="UP000001747">
    <property type="component" value="Chromosome"/>
</dbReference>
<dbReference type="GO" id="GO:0005509">
    <property type="term" value="F:calcium ion binding"/>
    <property type="evidence" value="ECO:0007669"/>
    <property type="project" value="UniProtKB-UniRule"/>
</dbReference>
<dbReference type="GO" id="GO:0006388">
    <property type="term" value="P:tRNA splicing, via endonucleolytic cleavage and ligation"/>
    <property type="evidence" value="ECO:0007669"/>
    <property type="project" value="UniProtKB-UniRule"/>
</dbReference>
<dbReference type="Gene3D" id="3.55.10.10">
    <property type="entry name" value="Archease domain"/>
    <property type="match status" value="1"/>
</dbReference>
<dbReference type="HAMAP" id="MF_01222">
    <property type="entry name" value="Archease_arch"/>
    <property type="match status" value="1"/>
</dbReference>
<dbReference type="InterPro" id="IPR002804">
    <property type="entry name" value="Archease"/>
</dbReference>
<dbReference type="InterPro" id="IPR022952">
    <property type="entry name" value="Archease_arc"/>
</dbReference>
<dbReference type="InterPro" id="IPR023572">
    <property type="entry name" value="Archease_dom"/>
</dbReference>
<dbReference type="InterPro" id="IPR036820">
    <property type="entry name" value="Archease_dom_sf"/>
</dbReference>
<dbReference type="NCBIfam" id="NF001617">
    <property type="entry name" value="PRK00407.1"/>
    <property type="match status" value="1"/>
</dbReference>
<dbReference type="PANTHER" id="PTHR12682">
    <property type="entry name" value="ARCHEASE"/>
    <property type="match status" value="1"/>
</dbReference>
<dbReference type="PANTHER" id="PTHR12682:SF11">
    <property type="entry name" value="PROTEIN ARCHEASE"/>
    <property type="match status" value="1"/>
</dbReference>
<dbReference type="Pfam" id="PF01951">
    <property type="entry name" value="Archease"/>
    <property type="match status" value="1"/>
</dbReference>
<dbReference type="SUPFAM" id="SSF69819">
    <property type="entry name" value="MTH1598-like"/>
    <property type="match status" value="1"/>
</dbReference>
<sequence length="139" mass="16374">MRSFEFFEHTADVGIRAYGKSLEEAFSNAALGVFEVITDTSKVKPIEYREIYLNGYDLENLLYKWIEELLYYYDSELMVFSKFDLMIDQDSMTLEGKAWGEKFNGKIHERRTVVKAMTYHQLSIEKTENCYVITFVVDI</sequence>
<organism>
    <name type="scientific">Saccharolobus islandicus (strain L.S.2.15 / Lassen #1)</name>
    <name type="common">Sulfolobus islandicus</name>
    <dbReference type="NCBI Taxonomy" id="429572"/>
    <lineage>
        <taxon>Archaea</taxon>
        <taxon>Thermoproteota</taxon>
        <taxon>Thermoprotei</taxon>
        <taxon>Sulfolobales</taxon>
        <taxon>Sulfolobaceae</taxon>
        <taxon>Saccharolobus</taxon>
    </lineage>
</organism>
<proteinExistence type="inferred from homology"/>
<accession>C3MQ89</accession>
<keyword id="KW-0106">Calcium</keyword>
<keyword id="KW-0479">Metal-binding</keyword>
<keyword id="KW-0819">tRNA processing</keyword>
<reference key="1">
    <citation type="journal article" date="2009" name="Proc. Natl. Acad. Sci. U.S.A.">
        <title>Biogeography of the Sulfolobus islandicus pan-genome.</title>
        <authorList>
            <person name="Reno M.L."/>
            <person name="Held N.L."/>
            <person name="Fields C.J."/>
            <person name="Burke P.V."/>
            <person name="Whitaker R.J."/>
        </authorList>
    </citation>
    <scope>NUCLEOTIDE SEQUENCE [LARGE SCALE GENOMIC DNA]</scope>
    <source>
        <strain>L.S.2.15 / Lassen #1</strain>
    </source>
</reference>
<name>ARCH_SACI2</name>
<evidence type="ECO:0000250" key="1"/>
<evidence type="ECO:0000255" key="2">
    <source>
        <dbReference type="HAMAP-Rule" id="MF_01222"/>
    </source>
</evidence>
<feature type="chain" id="PRO_1000213973" description="Protein archease">
    <location>
        <begin position="1"/>
        <end position="139"/>
    </location>
</feature>
<feature type="binding site" evidence="1">
    <location>
        <position position="12"/>
    </location>
    <ligand>
        <name>Ca(2+)</name>
        <dbReference type="ChEBI" id="CHEBI:29108"/>
    </ligand>
</feature>
<feature type="binding site" evidence="1">
    <location>
        <position position="138"/>
    </location>
    <ligand>
        <name>Ca(2+)</name>
        <dbReference type="ChEBI" id="CHEBI:29108"/>
    </ligand>
</feature>
<feature type="binding site" evidence="1">
    <location>
        <position position="139"/>
    </location>
    <ligand>
        <name>Ca(2+)</name>
        <dbReference type="ChEBI" id="CHEBI:29108"/>
    </ligand>
</feature>